<name>MTR4_ARATH</name>
<reference key="1">
    <citation type="journal article" date="2000" name="Nature">
        <title>Sequence and analysis of chromosome 1 of the plant Arabidopsis thaliana.</title>
        <authorList>
            <person name="Theologis A."/>
            <person name="Ecker J.R."/>
            <person name="Palm C.J."/>
            <person name="Federspiel N.A."/>
            <person name="Kaul S."/>
            <person name="White O."/>
            <person name="Alonso J."/>
            <person name="Altafi H."/>
            <person name="Araujo R."/>
            <person name="Bowman C.L."/>
            <person name="Brooks S.Y."/>
            <person name="Buehler E."/>
            <person name="Chan A."/>
            <person name="Chao Q."/>
            <person name="Chen H."/>
            <person name="Cheuk R.F."/>
            <person name="Chin C.W."/>
            <person name="Chung M.K."/>
            <person name="Conn L."/>
            <person name="Conway A.B."/>
            <person name="Conway A.R."/>
            <person name="Creasy T.H."/>
            <person name="Dewar K."/>
            <person name="Dunn P."/>
            <person name="Etgu P."/>
            <person name="Feldblyum T.V."/>
            <person name="Feng J.-D."/>
            <person name="Fong B."/>
            <person name="Fujii C.Y."/>
            <person name="Gill J.E."/>
            <person name="Goldsmith A.D."/>
            <person name="Haas B."/>
            <person name="Hansen N.F."/>
            <person name="Hughes B."/>
            <person name="Huizar L."/>
            <person name="Hunter J.L."/>
            <person name="Jenkins J."/>
            <person name="Johnson-Hopson C."/>
            <person name="Khan S."/>
            <person name="Khaykin E."/>
            <person name="Kim C.J."/>
            <person name="Koo H.L."/>
            <person name="Kremenetskaia I."/>
            <person name="Kurtz D.B."/>
            <person name="Kwan A."/>
            <person name="Lam B."/>
            <person name="Langin-Hooper S."/>
            <person name="Lee A."/>
            <person name="Lee J.M."/>
            <person name="Lenz C.A."/>
            <person name="Li J.H."/>
            <person name="Li Y.-P."/>
            <person name="Lin X."/>
            <person name="Liu S.X."/>
            <person name="Liu Z.A."/>
            <person name="Luros J.S."/>
            <person name="Maiti R."/>
            <person name="Marziali A."/>
            <person name="Militscher J."/>
            <person name="Miranda M."/>
            <person name="Nguyen M."/>
            <person name="Nierman W.C."/>
            <person name="Osborne B.I."/>
            <person name="Pai G."/>
            <person name="Peterson J."/>
            <person name="Pham P.K."/>
            <person name="Rizzo M."/>
            <person name="Rooney T."/>
            <person name="Rowley D."/>
            <person name="Sakano H."/>
            <person name="Salzberg S.L."/>
            <person name="Schwartz J.R."/>
            <person name="Shinn P."/>
            <person name="Southwick A.M."/>
            <person name="Sun H."/>
            <person name="Tallon L.J."/>
            <person name="Tambunga G."/>
            <person name="Toriumi M.J."/>
            <person name="Town C.D."/>
            <person name="Utterback T."/>
            <person name="Van Aken S."/>
            <person name="Vaysberg M."/>
            <person name="Vysotskaia V.S."/>
            <person name="Walker M."/>
            <person name="Wu D."/>
            <person name="Yu G."/>
            <person name="Fraser C.M."/>
            <person name="Venter J.C."/>
            <person name="Davis R.W."/>
        </authorList>
    </citation>
    <scope>NUCLEOTIDE SEQUENCE [LARGE SCALE GENOMIC DNA]</scope>
    <source>
        <strain>cv. Columbia</strain>
    </source>
</reference>
<reference key="2">
    <citation type="journal article" date="2017" name="Plant J.">
        <title>Araport11: a complete reannotation of the Arabidopsis thaliana reference genome.</title>
        <authorList>
            <person name="Cheng C.Y."/>
            <person name="Krishnakumar V."/>
            <person name="Chan A.P."/>
            <person name="Thibaud-Nissen F."/>
            <person name="Schobel S."/>
            <person name="Town C.D."/>
        </authorList>
    </citation>
    <scope>GENOME REANNOTATION</scope>
    <source>
        <strain>cv. Columbia</strain>
    </source>
</reference>
<reference key="3">
    <citation type="submission" date="2004-09" db="EMBL/GenBank/DDBJ databases">
        <title>Large-scale analysis of RIKEN Arabidopsis full-length (RAFL) cDNAs.</title>
        <authorList>
            <person name="Totoki Y."/>
            <person name="Seki M."/>
            <person name="Ishida J."/>
            <person name="Nakajima M."/>
            <person name="Enju A."/>
            <person name="Kamiya A."/>
            <person name="Narusaka M."/>
            <person name="Shin-i T."/>
            <person name="Nakagawa M."/>
            <person name="Sakamoto N."/>
            <person name="Oishi K."/>
            <person name="Kohara Y."/>
            <person name="Kobayashi M."/>
            <person name="Toyoda A."/>
            <person name="Sakaki Y."/>
            <person name="Sakurai T."/>
            <person name="Iida K."/>
            <person name="Akiyama K."/>
            <person name="Satou M."/>
            <person name="Toyoda T."/>
            <person name="Konagaya A."/>
            <person name="Carninci P."/>
            <person name="Kawai J."/>
            <person name="Hayashizaki Y."/>
            <person name="Shinozaki K."/>
        </authorList>
    </citation>
    <scope>NUCLEOTIDE SEQUENCE [LARGE SCALE MRNA]</scope>
    <source>
        <strain>cv. Columbia</strain>
    </source>
</reference>
<reference key="4">
    <citation type="journal article" date="2011" name="Plant J.">
        <title>MTR4, a putative RNA helicase and exosome co-factor, is required for proper rRNA biogenesis and development in Arabidopsis thaliana.</title>
        <authorList>
            <person name="Lange H."/>
            <person name="Sement F.M."/>
            <person name="Gagliardi D."/>
        </authorList>
    </citation>
    <scope>FUNCTION</scope>
    <scope>TISSUE SPECIFICITY</scope>
    <scope>SUBCELLULAR LOCATION</scope>
    <scope>DISRUPTION PHENOTYPE</scope>
</reference>
<reference key="5">
    <citation type="journal article" date="2013" name="PLoS ONE">
        <title>Genome-wide comparative in silico analysis of the RNA helicase gene family in Zea mays and Glycine max: a comparison with Arabidopsis and Oryza sativa.</title>
        <authorList>
            <person name="Xu R."/>
            <person name="Zhang S."/>
            <person name="Huang J."/>
            <person name="Zheng C."/>
        </authorList>
    </citation>
    <scope>GENE FAMILY</scope>
</reference>
<reference key="6">
    <citation type="journal article" date="2014" name="PLoS Genet.">
        <title>The RNA helicases AtMTR4 and HEN2 target specific subsets of nuclear transcripts for degradation by the nuclear exosome in Arabidopsis thaliana.</title>
        <authorList>
            <person name="Lange H."/>
            <person name="Zuber H."/>
            <person name="Sement F.M."/>
            <person name="Chicher J."/>
            <person name="Kuhn L."/>
            <person name="Hammann P."/>
            <person name="Brunaud V."/>
            <person name="Berard C."/>
            <person name="Bouteiller N."/>
            <person name="Balzergue S."/>
            <person name="Aubourg S."/>
            <person name="Martin-Magniette M.L."/>
            <person name="Vaucheret H."/>
            <person name="Gagliardi D."/>
        </authorList>
    </citation>
    <scope>FUNCTION</scope>
    <scope>SUBCELLULAR LOCATION</scope>
    <scope>ASSOCIATION WITH THE RNA EXOSOME COMPLEX</scope>
</reference>
<evidence type="ECO:0000255" key="1">
    <source>
        <dbReference type="PROSITE-ProRule" id="PRU00541"/>
    </source>
</evidence>
<evidence type="ECO:0000255" key="2">
    <source>
        <dbReference type="PROSITE-ProRule" id="PRU00542"/>
    </source>
</evidence>
<evidence type="ECO:0000256" key="3">
    <source>
        <dbReference type="SAM" id="MobiDB-lite"/>
    </source>
</evidence>
<evidence type="ECO:0000269" key="4">
    <source>
    </source>
</evidence>
<evidence type="ECO:0000269" key="5">
    <source>
    </source>
</evidence>
<evidence type="ECO:0000303" key="6">
    <source>
    </source>
</evidence>
<evidence type="ECO:0000305" key="7"/>
<evidence type="ECO:0000312" key="8">
    <source>
        <dbReference type="Araport" id="AT1G59760"/>
    </source>
</evidence>
<evidence type="ECO:0000312" key="9">
    <source>
        <dbReference type="EMBL" id="AAD39319.1"/>
    </source>
</evidence>
<comment type="function">
    <text evidence="4 5">ATP-dependent RNA helicase that associates with the RNA exosome complex (PubMed:21682783, PubMed:25144737). Required for proper rRNA biogenesis and development. Involved in the 3'-processing of the 7S pre-RNA to the mature 5.8S rRNA and also in the removal of rRNA maturation by-products (PubMed:21682783).</text>
</comment>
<comment type="catalytic activity">
    <reaction evidence="7">
        <text>ATP + H2O = ADP + phosphate + H(+)</text>
        <dbReference type="Rhea" id="RHEA:13065"/>
        <dbReference type="ChEBI" id="CHEBI:15377"/>
        <dbReference type="ChEBI" id="CHEBI:15378"/>
        <dbReference type="ChEBI" id="CHEBI:30616"/>
        <dbReference type="ChEBI" id="CHEBI:43474"/>
        <dbReference type="ChEBI" id="CHEBI:456216"/>
        <dbReference type="EC" id="3.6.4.13"/>
    </reaction>
</comment>
<comment type="subcellular location">
    <subcellularLocation>
        <location evidence="4 5">Nucleus</location>
        <location evidence="4 5">Nucleolus</location>
    </subcellularLocation>
</comment>
<comment type="tissue specificity">
    <text evidence="4">Ubiquitous but preferentially expressed in active tissues.</text>
</comment>
<comment type="disruption phenotype">
    <text evidence="4">Slower embryogenesis and several developmental defects including aberrant vein patterning, pointed first and second leaves, smaller rosettes and shorter roots.</text>
</comment>
<comment type="similarity">
    <text evidence="7">Belongs to the DExH box helicase family. SKI2 subfamily.</text>
</comment>
<proteinExistence type="evidence at transcript level"/>
<organism>
    <name type="scientific">Arabidopsis thaliana</name>
    <name type="common">Mouse-ear cress</name>
    <dbReference type="NCBI Taxonomy" id="3702"/>
    <lineage>
        <taxon>Eukaryota</taxon>
        <taxon>Viridiplantae</taxon>
        <taxon>Streptophyta</taxon>
        <taxon>Embryophyta</taxon>
        <taxon>Tracheophyta</taxon>
        <taxon>Spermatophyta</taxon>
        <taxon>Magnoliopsida</taxon>
        <taxon>eudicotyledons</taxon>
        <taxon>Gunneridae</taxon>
        <taxon>Pentapetalae</taxon>
        <taxon>rosids</taxon>
        <taxon>malvids</taxon>
        <taxon>Brassicales</taxon>
        <taxon>Brassicaceae</taxon>
        <taxon>Camelineae</taxon>
        <taxon>Arabidopsis</taxon>
    </lineage>
</organism>
<keyword id="KW-0067">ATP-binding</keyword>
<keyword id="KW-0347">Helicase</keyword>
<keyword id="KW-0378">Hydrolase</keyword>
<keyword id="KW-0547">Nucleotide-binding</keyword>
<keyword id="KW-0539">Nucleus</keyword>
<keyword id="KW-1185">Reference proteome</keyword>
<keyword id="KW-0694">RNA-binding</keyword>
<keyword id="KW-0698">rRNA processing</keyword>
<keyword id="KW-0699">rRNA-binding</keyword>
<feature type="chain" id="PRO_0000435298" description="DExH-box ATP-dependent RNA helicase DExH9">
    <location>
        <begin position="1"/>
        <end position="988"/>
    </location>
</feature>
<feature type="domain" description="Helicase ATP-binding" evidence="1">
    <location>
        <begin position="76"/>
        <end position="232"/>
    </location>
</feature>
<feature type="domain" description="Helicase C-terminal" evidence="2">
    <location>
        <begin position="307"/>
        <end position="509"/>
    </location>
</feature>
<feature type="region of interest" description="Disordered" evidence="3">
    <location>
        <begin position="1"/>
        <end position="27"/>
    </location>
</feature>
<feature type="short sequence motif" description="DEVH box" evidence="7">
    <location>
        <begin position="180"/>
        <end position="183"/>
    </location>
</feature>
<feature type="binding site" evidence="1">
    <location>
        <begin position="89"/>
        <end position="96"/>
    </location>
    <ligand>
        <name>ATP</name>
        <dbReference type="ChEBI" id="CHEBI:30616"/>
    </ligand>
</feature>
<dbReference type="EC" id="3.6.4.13" evidence="7"/>
<dbReference type="EMBL" id="AC007258">
    <property type="protein sequence ID" value="AAD39319.1"/>
    <property type="molecule type" value="Genomic_DNA"/>
</dbReference>
<dbReference type="EMBL" id="CP002684">
    <property type="protein sequence ID" value="AEE33616.1"/>
    <property type="molecule type" value="Genomic_DNA"/>
</dbReference>
<dbReference type="EMBL" id="AK176836">
    <property type="protein sequence ID" value="BAD44599.1"/>
    <property type="molecule type" value="mRNA"/>
</dbReference>
<dbReference type="PIR" id="E96621">
    <property type="entry name" value="E96621"/>
</dbReference>
<dbReference type="RefSeq" id="NP_176185.1">
    <property type="nucleotide sequence ID" value="NM_104669.4"/>
</dbReference>
<dbReference type="SMR" id="Q9XIF2"/>
<dbReference type="FunCoup" id="Q9XIF2">
    <property type="interactions" value="4493"/>
</dbReference>
<dbReference type="IntAct" id="Q9XIF2">
    <property type="interactions" value="1"/>
</dbReference>
<dbReference type="STRING" id="3702.Q9XIF2"/>
<dbReference type="iPTMnet" id="Q9XIF2"/>
<dbReference type="PaxDb" id="3702-AT1G59760.1"/>
<dbReference type="ProteomicsDB" id="251362"/>
<dbReference type="EnsemblPlants" id="AT1G59760.1">
    <property type="protein sequence ID" value="AT1G59760.1"/>
    <property type="gene ID" value="AT1G59760"/>
</dbReference>
<dbReference type="GeneID" id="842269"/>
<dbReference type="Gramene" id="AT1G59760.1">
    <property type="protein sequence ID" value="AT1G59760.1"/>
    <property type="gene ID" value="AT1G59760"/>
</dbReference>
<dbReference type="KEGG" id="ath:AT1G59760"/>
<dbReference type="Araport" id="AT1G59760"/>
<dbReference type="TAIR" id="AT1G59760">
    <property type="gene designation" value="MTR4"/>
</dbReference>
<dbReference type="eggNOG" id="KOG0948">
    <property type="taxonomic scope" value="Eukaryota"/>
</dbReference>
<dbReference type="HOGENOM" id="CLU_002902_0_1_1"/>
<dbReference type="InParanoid" id="Q9XIF2"/>
<dbReference type="OMA" id="IMLKNYN"/>
<dbReference type="OrthoDB" id="64767at2759"/>
<dbReference type="PhylomeDB" id="Q9XIF2"/>
<dbReference type="CD-CODE" id="4299E36E">
    <property type="entry name" value="Nucleolus"/>
</dbReference>
<dbReference type="PRO" id="PR:Q9XIF2"/>
<dbReference type="Proteomes" id="UP000006548">
    <property type="component" value="Chromosome 1"/>
</dbReference>
<dbReference type="ExpressionAtlas" id="Q9XIF2">
    <property type="expression patterns" value="baseline and differential"/>
</dbReference>
<dbReference type="GO" id="GO:0005730">
    <property type="term" value="C:nucleolus"/>
    <property type="evidence" value="ECO:0007669"/>
    <property type="project" value="UniProtKB-SubCell"/>
</dbReference>
<dbReference type="GO" id="GO:0005654">
    <property type="term" value="C:nucleoplasm"/>
    <property type="evidence" value="ECO:0000314"/>
    <property type="project" value="UniProtKB"/>
</dbReference>
<dbReference type="GO" id="GO:0005634">
    <property type="term" value="C:nucleus"/>
    <property type="evidence" value="ECO:0000314"/>
    <property type="project" value="TAIR"/>
</dbReference>
<dbReference type="GO" id="GO:0005524">
    <property type="term" value="F:ATP binding"/>
    <property type="evidence" value="ECO:0007669"/>
    <property type="project" value="UniProtKB-KW"/>
</dbReference>
<dbReference type="GO" id="GO:0016887">
    <property type="term" value="F:ATP hydrolysis activity"/>
    <property type="evidence" value="ECO:0007669"/>
    <property type="project" value="RHEA"/>
</dbReference>
<dbReference type="GO" id="GO:0003724">
    <property type="term" value="F:RNA helicase activity"/>
    <property type="evidence" value="ECO:0007669"/>
    <property type="project" value="UniProtKB-EC"/>
</dbReference>
<dbReference type="GO" id="GO:0019843">
    <property type="term" value="F:rRNA binding"/>
    <property type="evidence" value="ECO:0007669"/>
    <property type="project" value="UniProtKB-KW"/>
</dbReference>
<dbReference type="GO" id="GO:0006401">
    <property type="term" value="P:RNA catabolic process"/>
    <property type="evidence" value="ECO:0007669"/>
    <property type="project" value="InterPro"/>
</dbReference>
<dbReference type="GO" id="GO:0031125">
    <property type="term" value="P:rRNA 3'-end processing"/>
    <property type="evidence" value="ECO:0000315"/>
    <property type="project" value="TAIR"/>
</dbReference>
<dbReference type="GO" id="GO:0006364">
    <property type="term" value="P:rRNA processing"/>
    <property type="evidence" value="ECO:0000315"/>
    <property type="project" value="TAIR"/>
</dbReference>
<dbReference type="CDD" id="cd18024">
    <property type="entry name" value="DEXHc_Mtr4-like"/>
    <property type="match status" value="1"/>
</dbReference>
<dbReference type="CDD" id="cd18795">
    <property type="entry name" value="SF2_C_Ski2"/>
    <property type="match status" value="1"/>
</dbReference>
<dbReference type="FunFam" id="3.40.50.300:FF:000083">
    <property type="entry name" value="ATP-dependent RNA helicase DOB1"/>
    <property type="match status" value="1"/>
</dbReference>
<dbReference type="FunFam" id="3.40.50.300:FF:000141">
    <property type="entry name" value="ATP-dependent RNA helicase DOB1"/>
    <property type="match status" value="1"/>
</dbReference>
<dbReference type="FunFam" id="2.40.30.300:FF:000003">
    <property type="entry name" value="DEAD-box family ATP dependent helicase"/>
    <property type="match status" value="1"/>
</dbReference>
<dbReference type="FunFam" id="1.10.3380.30:FF:000009">
    <property type="entry name" value="DExH-box ATP-dependent RNA helicase DExH9"/>
    <property type="match status" value="1"/>
</dbReference>
<dbReference type="Gene3D" id="1.10.3380.30">
    <property type="match status" value="1"/>
</dbReference>
<dbReference type="Gene3D" id="2.40.30.300">
    <property type="match status" value="1"/>
</dbReference>
<dbReference type="Gene3D" id="3.40.50.300">
    <property type="entry name" value="P-loop containing nucleotide triphosphate hydrolases"/>
    <property type="match status" value="2"/>
</dbReference>
<dbReference type="InterPro" id="IPR011545">
    <property type="entry name" value="DEAD/DEAH_box_helicase_dom"/>
</dbReference>
<dbReference type="InterPro" id="IPR014001">
    <property type="entry name" value="Helicase_ATP-bd"/>
</dbReference>
<dbReference type="InterPro" id="IPR001650">
    <property type="entry name" value="Helicase_C-like"/>
</dbReference>
<dbReference type="InterPro" id="IPR048392">
    <property type="entry name" value="MTR4-like_stalk"/>
</dbReference>
<dbReference type="InterPro" id="IPR025696">
    <property type="entry name" value="MTR4_beta-barrel"/>
</dbReference>
<dbReference type="InterPro" id="IPR027417">
    <property type="entry name" value="P-loop_NTPase"/>
</dbReference>
<dbReference type="InterPro" id="IPR050699">
    <property type="entry name" value="RNA-DNA_Helicase"/>
</dbReference>
<dbReference type="InterPro" id="IPR016438">
    <property type="entry name" value="SKI2-like"/>
</dbReference>
<dbReference type="InterPro" id="IPR012961">
    <property type="entry name" value="Ski2/MTR4_C"/>
</dbReference>
<dbReference type="PANTHER" id="PTHR12131">
    <property type="entry name" value="ATP-DEPENDENT RNA AND DNA HELICASE"/>
    <property type="match status" value="1"/>
</dbReference>
<dbReference type="PANTHER" id="PTHR12131:SF25">
    <property type="entry name" value="DEXH-BOX ATP-DEPENDENT RNA HELICASE DEXH9"/>
    <property type="match status" value="1"/>
</dbReference>
<dbReference type="Pfam" id="PF00270">
    <property type="entry name" value="DEAD"/>
    <property type="match status" value="1"/>
</dbReference>
<dbReference type="Pfam" id="PF08148">
    <property type="entry name" value="DSHCT"/>
    <property type="match status" value="1"/>
</dbReference>
<dbReference type="Pfam" id="PF00271">
    <property type="entry name" value="Helicase_C"/>
    <property type="match status" value="1"/>
</dbReference>
<dbReference type="Pfam" id="PF21408">
    <property type="entry name" value="MTR4-like_stalk"/>
    <property type="match status" value="1"/>
</dbReference>
<dbReference type="Pfam" id="PF13234">
    <property type="entry name" value="MTR4_beta-barrel"/>
    <property type="match status" value="1"/>
</dbReference>
<dbReference type="PIRSF" id="PIRSF005198">
    <property type="entry name" value="Antiviral_helicase_SKI2"/>
    <property type="match status" value="1"/>
</dbReference>
<dbReference type="SMART" id="SM00487">
    <property type="entry name" value="DEXDc"/>
    <property type="match status" value="1"/>
</dbReference>
<dbReference type="SMART" id="SM01142">
    <property type="entry name" value="DSHCT"/>
    <property type="match status" value="1"/>
</dbReference>
<dbReference type="SMART" id="SM00490">
    <property type="entry name" value="HELICc"/>
    <property type="match status" value="1"/>
</dbReference>
<dbReference type="SUPFAM" id="SSF52540">
    <property type="entry name" value="P-loop containing nucleoside triphosphate hydrolases"/>
    <property type="match status" value="1"/>
</dbReference>
<dbReference type="PROSITE" id="PS51192">
    <property type="entry name" value="HELICASE_ATP_BIND_1"/>
    <property type="match status" value="1"/>
</dbReference>
<dbReference type="PROSITE" id="PS51194">
    <property type="entry name" value="HELICASE_CTER"/>
    <property type="match status" value="1"/>
</dbReference>
<gene>
    <name evidence="6" type="primary">MTR4</name>
    <name evidence="8" type="ordered locus">At1g59760</name>
    <name evidence="9" type="ORF">F23H11.8</name>
</gene>
<sequence length="988" mass="111887">MGSVKRKSVEESSDSAPPQKVQREDDSTQIINEELVGCVHDVSFPENYVPLAPSVHNKPPAKDFPFTLDSFQSEAIKCLDNGESVMVSAHTSAGKTVVASYAIAMSLKENQRVIYTSPIKALSNQKYRDFKEEFSDVGLMTGDVTIDPNASCLVMTTEILRSMQYKGSEIMREVAWIIFDEVHYMRDSERGVVWEESIVMAPKNSRFVFLSATVPNAKEFADWVAKVHQQPCHIVYTDYRPTPLQHYVFPAGGNGLYLVVDEKSKFHEDSFQKSLNALVPTNESDKKRDNGKFQKGLVIGKLGEESDIFKLVKMIIQRQYDPVILFSFSKKECEALAMQMSKMVLNSDDEKDAVETIFASAIDMLSDDDKKLPQVSNILPILKRGIGVHHSGLLPILKEVIEILFQEGLIKCLFATETFSIGLNMPAKTVVFTNVRKFDGDKFRWLSSGEYIQMSGRAGRRGIDKRGICILMVDEKMEPAVAKSMLKGSADSLNSAFHLSYNMLLNQLRCEEGDPENLLRNSFFQFQADRAIPDLEKQIKSLEEERDSLVIEEEESLKNYYNLILQYKSLKKDIREIVFTPKYCLPFLLPNRAVCLDCTNDDEEPQSFSIEDQDTWGVIMKFNKVKSLSEDDDSRRPEDANYTVDVLTRCMVSKDGVGKKKVKAVPIKERGEPVVVTVPLSQIKSLSSAIMNIPKDLVPLEARENALKKVSELLSRHPDGIPLDPEVDMKIKSSSYKKTVRRLEALENLFEKHKIAKSPLITEKLKVLQMKEELIAKIKSLKKTVRSSTALAFKDELKARKRVLRRLGYITSDNVVELKGKVACEISSAEELTLTELMFSGIFKDAKVEELVSLLSCFVWRERLPDAAKPREELDLLFIQLQDTARRVAEVQLDCKVEIDVESFVQSFRPDIMEAVYAWAKGSKFYEVMEIARVFEGSLIRAIRRMEEVLQQLIVAAKSIGETQLEAKLEEAVSKIKRDIVFAASLYL</sequence>
<protein>
    <recommendedName>
        <fullName evidence="7">DExH-box ATP-dependent RNA helicase DExH9</fullName>
        <ecNumber evidence="7">3.6.4.13</ecNumber>
    </recommendedName>
    <alternativeName>
        <fullName evidence="7">Protein MTR4 homolog</fullName>
        <shortName evidence="6">AtMTR4</shortName>
    </alternativeName>
</protein>
<accession>Q9XIF2</accession>